<proteinExistence type="evidence at transcript level"/>
<gene>
    <name type="primary">mab21L3</name>
</gene>
<sequence length="368" mass="43078">MKGVKAEDVHHFLLNTEDLRHRRVSRMVEEVQKILLQVTSDISNRDSRFHCISNAGIHSDSLKVLSPSQFLVTVPLRGLSGFRQKKTRRWRYYSPSGTQLLAPAMEPEKLHQWLEIEQFQKSTPHWHDNDVNIKGDLVPARIIHVFLEHLYRAITFCSLSDKVNVLESYGPSIRLNVETSEQMVEVELVPVVEVPGYWPKKSQWPRFFKRWPLRERVQCVKSFGFDLLARSNYHWQLSFLRGERLLLEAMDDDGGCRMKCYRAVRQMKEDVWCPGNHPVINSQHLQMIFLWASERHPSAKAWKDLGRCFLRIVRRLQKCARQRFLRHYFVRRANLLKYADTAQLDALADKLSRFLQNPSLGQGASSVC</sequence>
<evidence type="ECO:0000305" key="1"/>
<keyword id="KW-1185">Reference proteome</keyword>
<organism>
    <name type="scientific">Xenopus laevis</name>
    <name type="common">African clawed frog</name>
    <dbReference type="NCBI Taxonomy" id="8355"/>
    <lineage>
        <taxon>Eukaryota</taxon>
        <taxon>Metazoa</taxon>
        <taxon>Chordata</taxon>
        <taxon>Craniata</taxon>
        <taxon>Vertebrata</taxon>
        <taxon>Euteleostomi</taxon>
        <taxon>Amphibia</taxon>
        <taxon>Batrachia</taxon>
        <taxon>Anura</taxon>
        <taxon>Pipoidea</taxon>
        <taxon>Pipidae</taxon>
        <taxon>Xenopodinae</taxon>
        <taxon>Xenopus</taxon>
        <taxon>Xenopus</taxon>
    </lineage>
</organism>
<feature type="chain" id="PRO_0000286586" description="Protein mab-21-like 3">
    <location>
        <begin position="1"/>
        <end position="368"/>
    </location>
</feature>
<reference key="1">
    <citation type="submission" date="2004-06" db="EMBL/GenBank/DDBJ databases">
        <authorList>
            <consortium name="NIH - Xenopus Gene Collection (XGC) project"/>
        </authorList>
    </citation>
    <scope>NUCLEOTIDE SEQUENCE [LARGE SCALE MRNA]</scope>
    <source>
        <tissue>Embryo</tissue>
    </source>
</reference>
<name>MB213_XENLA</name>
<accession>Q6GNM3</accession>
<protein>
    <recommendedName>
        <fullName>Protein mab-21-like 3</fullName>
    </recommendedName>
</protein>
<dbReference type="EMBL" id="BC073481">
    <property type="protein sequence ID" value="AAH73481.1"/>
    <property type="molecule type" value="mRNA"/>
</dbReference>
<dbReference type="RefSeq" id="NP_001085891.1">
    <property type="nucleotide sequence ID" value="NM_001092422.1"/>
</dbReference>
<dbReference type="SMR" id="Q6GNM3"/>
<dbReference type="DNASU" id="444318"/>
<dbReference type="GeneID" id="444318"/>
<dbReference type="KEGG" id="xla:444318"/>
<dbReference type="AGR" id="Xenbase:XB-GENE-6255400"/>
<dbReference type="CTD" id="444318"/>
<dbReference type="Xenbase" id="XB-GENE-6255400">
    <property type="gene designation" value="mab21l3.S"/>
</dbReference>
<dbReference type="OMA" id="WSKKARW"/>
<dbReference type="OrthoDB" id="5947963at2759"/>
<dbReference type="Proteomes" id="UP000186698">
    <property type="component" value="Chromosome 2S"/>
</dbReference>
<dbReference type="Bgee" id="444318">
    <property type="expression patterns" value="Expressed in neurula embryo and 7 other cell types or tissues"/>
</dbReference>
<dbReference type="Gene3D" id="1.10.1410.40">
    <property type="match status" value="1"/>
</dbReference>
<dbReference type="Gene3D" id="3.30.460.90">
    <property type="match status" value="1"/>
</dbReference>
<dbReference type="InterPro" id="IPR046903">
    <property type="entry name" value="Mab-21-like_nuc_Trfase"/>
</dbReference>
<dbReference type="InterPro" id="IPR046906">
    <property type="entry name" value="Mab-21_HhH/H2TH-like"/>
</dbReference>
<dbReference type="InterPro" id="IPR024810">
    <property type="entry name" value="MAB21L/cGLR"/>
</dbReference>
<dbReference type="PANTHER" id="PTHR10656">
    <property type="entry name" value="CELL FATE DETERMINING PROTEIN MAB21-RELATED"/>
    <property type="match status" value="1"/>
</dbReference>
<dbReference type="PANTHER" id="PTHR10656:SF30">
    <property type="entry name" value="PROTEIN MAB-21-LIKE 3"/>
    <property type="match status" value="1"/>
</dbReference>
<dbReference type="Pfam" id="PF03281">
    <property type="entry name" value="Mab-21"/>
    <property type="match status" value="1"/>
</dbReference>
<dbReference type="Pfam" id="PF20266">
    <property type="entry name" value="Mab-21_C"/>
    <property type="match status" value="1"/>
</dbReference>
<dbReference type="SMART" id="SM01265">
    <property type="entry name" value="Mab-21"/>
    <property type="match status" value="1"/>
</dbReference>
<comment type="similarity">
    <text evidence="1">Belongs to the mab-21 family.</text>
</comment>